<evidence type="ECO:0000255" key="1">
    <source>
        <dbReference type="HAMAP-Rule" id="MF_01540"/>
    </source>
</evidence>
<accession>B2TZH1</accession>
<reference key="1">
    <citation type="submission" date="2008-05" db="EMBL/GenBank/DDBJ databases">
        <title>Complete sequence of Shigella boydii serotype 18 strain BS512.</title>
        <authorList>
            <person name="Rasko D.A."/>
            <person name="Rosovitz M."/>
            <person name="Maurelli A.T."/>
            <person name="Myers G."/>
            <person name="Seshadri R."/>
            <person name="Cer R."/>
            <person name="Jiang L."/>
            <person name="Ravel J."/>
            <person name="Sebastian Y."/>
        </authorList>
    </citation>
    <scope>NUCLEOTIDE SEQUENCE [LARGE SCALE GENOMIC DNA]</scope>
    <source>
        <strain>CDC 3083-94 / BS512</strain>
    </source>
</reference>
<comment type="function">
    <text evidence="1">Component of the sulfite reductase complex that catalyzes the 6-electron reduction of sulfite to sulfide. This is one of several activities required for the biosynthesis of L-cysteine from sulfate.</text>
</comment>
<comment type="catalytic activity">
    <reaction evidence="1">
        <text>hydrogen sulfide + 3 NADP(+) + 3 H2O = sulfite + 3 NADPH + 4 H(+)</text>
        <dbReference type="Rhea" id="RHEA:13801"/>
        <dbReference type="ChEBI" id="CHEBI:15377"/>
        <dbReference type="ChEBI" id="CHEBI:15378"/>
        <dbReference type="ChEBI" id="CHEBI:17359"/>
        <dbReference type="ChEBI" id="CHEBI:29919"/>
        <dbReference type="ChEBI" id="CHEBI:57783"/>
        <dbReference type="ChEBI" id="CHEBI:58349"/>
        <dbReference type="EC" id="1.8.1.2"/>
    </reaction>
</comment>
<comment type="cofactor">
    <cofactor evidence="1">
        <name>siroheme</name>
        <dbReference type="ChEBI" id="CHEBI:60052"/>
    </cofactor>
    <text evidence="1">Binds 1 siroheme per subunit.</text>
</comment>
<comment type="cofactor">
    <cofactor evidence="1">
        <name>[4Fe-4S] cluster</name>
        <dbReference type="ChEBI" id="CHEBI:49883"/>
    </cofactor>
    <text evidence="1">Binds 1 [4Fe-4S] cluster per subunit.</text>
</comment>
<comment type="pathway">
    <text evidence="1">Sulfur metabolism; hydrogen sulfide biosynthesis; hydrogen sulfide from sulfite (NADPH route): step 1/1.</text>
</comment>
<comment type="subunit">
    <text evidence="1">Alpha(8)-beta(8). The alpha component is a flavoprotein, the beta component is a hemoprotein.</text>
</comment>
<comment type="similarity">
    <text evidence="1">Belongs to the nitrite and sulfite reductase 4Fe-4S domain family.</text>
</comment>
<feature type="chain" id="PRO_1000146661" description="Sulfite reductase [NADPH] hemoprotein beta-component">
    <location>
        <begin position="1"/>
        <end position="570"/>
    </location>
</feature>
<feature type="binding site" evidence="1">
    <location>
        <position position="434"/>
    </location>
    <ligand>
        <name>[4Fe-4S] cluster</name>
        <dbReference type="ChEBI" id="CHEBI:49883"/>
    </ligand>
</feature>
<feature type="binding site" evidence="1">
    <location>
        <position position="440"/>
    </location>
    <ligand>
        <name>[4Fe-4S] cluster</name>
        <dbReference type="ChEBI" id="CHEBI:49883"/>
    </ligand>
</feature>
<feature type="binding site" evidence="1">
    <location>
        <position position="479"/>
    </location>
    <ligand>
        <name>[4Fe-4S] cluster</name>
        <dbReference type="ChEBI" id="CHEBI:49883"/>
    </ligand>
</feature>
<feature type="binding site" evidence="1">
    <location>
        <position position="483"/>
    </location>
    <ligand>
        <name>[4Fe-4S] cluster</name>
        <dbReference type="ChEBI" id="CHEBI:49883"/>
    </ligand>
</feature>
<feature type="binding site" description="axial binding residue" evidence="1">
    <location>
        <position position="483"/>
    </location>
    <ligand>
        <name>siroheme</name>
        <dbReference type="ChEBI" id="CHEBI:60052"/>
    </ligand>
    <ligandPart>
        <name>Fe</name>
        <dbReference type="ChEBI" id="CHEBI:18248"/>
    </ligandPart>
</feature>
<keyword id="KW-0004">4Fe-4S</keyword>
<keyword id="KW-0028">Amino-acid biosynthesis</keyword>
<keyword id="KW-0198">Cysteine biosynthesis</keyword>
<keyword id="KW-0349">Heme</keyword>
<keyword id="KW-0408">Iron</keyword>
<keyword id="KW-0411">Iron-sulfur</keyword>
<keyword id="KW-0479">Metal-binding</keyword>
<keyword id="KW-0521">NADP</keyword>
<keyword id="KW-0560">Oxidoreductase</keyword>
<keyword id="KW-1185">Reference proteome</keyword>
<proteinExistence type="inferred from homology"/>
<protein>
    <recommendedName>
        <fullName evidence="1">Sulfite reductase [NADPH] hemoprotein beta-component</fullName>
        <shortName evidence="1">SiR-HP</shortName>
        <shortName evidence="1">SiRHP</shortName>
        <ecNumber evidence="1">1.8.1.2</ecNumber>
    </recommendedName>
</protein>
<gene>
    <name evidence="1" type="primary">cysI</name>
    <name type="ordered locus">SbBS512_E3112</name>
</gene>
<name>CYSI_SHIB3</name>
<sequence>MSEKHPGPLVVEGKLTDAERMKLESNYLRGTIAEDLNDGLTGGFKGDNFLLIRFHGMYQQDDRDIRAERAEQKLEPRHAMLLRCRLPGGVITTKQWQAIDKFAGENTIYGSIRLTNRQTFQFHGILKKNVKPVHQMLHSVGLDALATANDMNRNVLCTSNPYESQLHAEAYEWAKKISEHLLPRTRAYAEIWLDQEKVATTDEEPILGQTYLPRKFKTTVVIPPQNDIDLHANDMNFVAIAENGKLVGFNLLVGGGLSIEHGNKKTYARTASEFGYLPLEHTLAVAEAVVTTQRDWGNRTDRKNAKTKYTLERVGVETFKAEVERRAGIKFEPIRPYEFTGRGDRIGWVKGIDDNWHLTLFIENGRILDYPGRPLKTGLLEIAKIHKGDFRITANQNLIIAGVPESEKAKIEKIAKESGLMNAVTPQRENSMACVSFPTCPLAMAEAERFLPSFIDNIDNLMAKHGVSDEHIVMRVTGCPNGCGRAMLAEVGLVGKAPGRYNLHLGGNRIGTRIPRMYKENITEPEILASLDELIGRWAKEREAGEGFGDFTVRAGIIRPVLDPARDLWD</sequence>
<organism>
    <name type="scientific">Shigella boydii serotype 18 (strain CDC 3083-94 / BS512)</name>
    <dbReference type="NCBI Taxonomy" id="344609"/>
    <lineage>
        <taxon>Bacteria</taxon>
        <taxon>Pseudomonadati</taxon>
        <taxon>Pseudomonadota</taxon>
        <taxon>Gammaproteobacteria</taxon>
        <taxon>Enterobacterales</taxon>
        <taxon>Enterobacteriaceae</taxon>
        <taxon>Shigella</taxon>
    </lineage>
</organism>
<dbReference type="EC" id="1.8.1.2" evidence="1"/>
<dbReference type="EMBL" id="CP001063">
    <property type="protein sequence ID" value="ACD09146.1"/>
    <property type="molecule type" value="Genomic_DNA"/>
</dbReference>
<dbReference type="RefSeq" id="WP_001290706.1">
    <property type="nucleotide sequence ID" value="NC_010658.1"/>
</dbReference>
<dbReference type="SMR" id="B2TZH1"/>
<dbReference type="STRING" id="344609.SbBS512_E3112"/>
<dbReference type="GeneID" id="75205593"/>
<dbReference type="KEGG" id="sbc:SbBS512_E3112"/>
<dbReference type="HOGENOM" id="CLU_001975_3_2_6"/>
<dbReference type="UniPathway" id="UPA00140">
    <property type="reaction ID" value="UER00207"/>
</dbReference>
<dbReference type="Proteomes" id="UP000001030">
    <property type="component" value="Chromosome"/>
</dbReference>
<dbReference type="GO" id="GO:0009337">
    <property type="term" value="C:sulfite reductase complex (NADPH)"/>
    <property type="evidence" value="ECO:0007669"/>
    <property type="project" value="InterPro"/>
</dbReference>
<dbReference type="GO" id="GO:0051539">
    <property type="term" value="F:4 iron, 4 sulfur cluster binding"/>
    <property type="evidence" value="ECO:0007669"/>
    <property type="project" value="UniProtKB-KW"/>
</dbReference>
<dbReference type="GO" id="GO:0020037">
    <property type="term" value="F:heme binding"/>
    <property type="evidence" value="ECO:0007669"/>
    <property type="project" value="InterPro"/>
</dbReference>
<dbReference type="GO" id="GO:0046872">
    <property type="term" value="F:metal ion binding"/>
    <property type="evidence" value="ECO:0007669"/>
    <property type="project" value="UniProtKB-KW"/>
</dbReference>
<dbReference type="GO" id="GO:0050661">
    <property type="term" value="F:NADP binding"/>
    <property type="evidence" value="ECO:0007669"/>
    <property type="project" value="InterPro"/>
</dbReference>
<dbReference type="GO" id="GO:0050311">
    <property type="term" value="F:sulfite reductase (ferredoxin) activity"/>
    <property type="evidence" value="ECO:0007669"/>
    <property type="project" value="TreeGrafter"/>
</dbReference>
<dbReference type="GO" id="GO:0004783">
    <property type="term" value="F:sulfite reductase (NADPH) activity"/>
    <property type="evidence" value="ECO:0007669"/>
    <property type="project" value="UniProtKB-UniRule"/>
</dbReference>
<dbReference type="GO" id="GO:0019344">
    <property type="term" value="P:cysteine biosynthetic process"/>
    <property type="evidence" value="ECO:0007669"/>
    <property type="project" value="UniProtKB-KW"/>
</dbReference>
<dbReference type="GO" id="GO:0070814">
    <property type="term" value="P:hydrogen sulfide biosynthetic process"/>
    <property type="evidence" value="ECO:0007669"/>
    <property type="project" value="UniProtKB-UniRule"/>
</dbReference>
<dbReference type="GO" id="GO:0000103">
    <property type="term" value="P:sulfate assimilation"/>
    <property type="evidence" value="ECO:0007669"/>
    <property type="project" value="UniProtKB-UniRule"/>
</dbReference>
<dbReference type="FunFam" id="3.30.413.10:FF:000003">
    <property type="entry name" value="Sulfite reductase [NADPH] hemoprotein beta-component"/>
    <property type="match status" value="1"/>
</dbReference>
<dbReference type="FunFam" id="3.30.413.10:FF:000004">
    <property type="entry name" value="Sulfite reductase [NADPH] hemoprotein beta-component"/>
    <property type="match status" value="1"/>
</dbReference>
<dbReference type="Gene3D" id="3.30.413.10">
    <property type="entry name" value="Sulfite Reductase Hemoprotein, domain 1"/>
    <property type="match status" value="2"/>
</dbReference>
<dbReference type="HAMAP" id="MF_01540">
    <property type="entry name" value="CysI"/>
    <property type="match status" value="1"/>
</dbReference>
<dbReference type="InterPro" id="IPR011786">
    <property type="entry name" value="CysI"/>
</dbReference>
<dbReference type="InterPro" id="IPR005117">
    <property type="entry name" value="NiRdtase/SiRdtase_haem-b_fer"/>
</dbReference>
<dbReference type="InterPro" id="IPR036136">
    <property type="entry name" value="Nit/Sulf_reduc_fer-like_dom_sf"/>
</dbReference>
<dbReference type="InterPro" id="IPR006067">
    <property type="entry name" value="NO2/SO3_Rdtase_4Fe4S_dom"/>
</dbReference>
<dbReference type="InterPro" id="IPR045169">
    <property type="entry name" value="NO2/SO3_Rdtase_4Fe4S_prot"/>
</dbReference>
<dbReference type="InterPro" id="IPR045854">
    <property type="entry name" value="NO2/SO3_Rdtase_4Fe4S_sf"/>
</dbReference>
<dbReference type="InterPro" id="IPR006066">
    <property type="entry name" value="NO2/SO3_Rdtase_FeS/sirohaem_BS"/>
</dbReference>
<dbReference type="NCBIfam" id="TIGR02041">
    <property type="entry name" value="CysI"/>
    <property type="match status" value="1"/>
</dbReference>
<dbReference type="NCBIfam" id="NF010029">
    <property type="entry name" value="PRK13504.1"/>
    <property type="match status" value="1"/>
</dbReference>
<dbReference type="PANTHER" id="PTHR11493:SF47">
    <property type="entry name" value="SULFITE REDUCTASE [NADPH] SUBUNIT BETA"/>
    <property type="match status" value="1"/>
</dbReference>
<dbReference type="PANTHER" id="PTHR11493">
    <property type="entry name" value="SULFITE REDUCTASE [NADPH] SUBUNIT BETA-RELATED"/>
    <property type="match status" value="1"/>
</dbReference>
<dbReference type="Pfam" id="PF01077">
    <property type="entry name" value="NIR_SIR"/>
    <property type="match status" value="1"/>
</dbReference>
<dbReference type="Pfam" id="PF03460">
    <property type="entry name" value="NIR_SIR_ferr"/>
    <property type="match status" value="2"/>
</dbReference>
<dbReference type="PRINTS" id="PR00397">
    <property type="entry name" value="SIROHAEM"/>
</dbReference>
<dbReference type="SUPFAM" id="SSF56014">
    <property type="entry name" value="Nitrite and sulphite reductase 4Fe-4S domain-like"/>
    <property type="match status" value="2"/>
</dbReference>
<dbReference type="SUPFAM" id="SSF55124">
    <property type="entry name" value="Nitrite/Sulfite reductase N-terminal domain-like"/>
    <property type="match status" value="2"/>
</dbReference>
<dbReference type="PROSITE" id="PS00365">
    <property type="entry name" value="NIR_SIR"/>
    <property type="match status" value="1"/>
</dbReference>